<name>C4D21_DROME</name>
<gene>
    <name type="primary">Cyp4d21</name>
    <name type="ORF">CG6730</name>
</gene>
<reference key="1">
    <citation type="journal article" date="2000" name="Science">
        <title>The genome sequence of Drosophila melanogaster.</title>
        <authorList>
            <person name="Adams M.D."/>
            <person name="Celniker S.E."/>
            <person name="Holt R.A."/>
            <person name="Evans C.A."/>
            <person name="Gocayne J.D."/>
            <person name="Amanatides P.G."/>
            <person name="Scherer S.E."/>
            <person name="Li P.W."/>
            <person name="Hoskins R.A."/>
            <person name="Galle R.F."/>
            <person name="George R.A."/>
            <person name="Lewis S.E."/>
            <person name="Richards S."/>
            <person name="Ashburner M."/>
            <person name="Henderson S.N."/>
            <person name="Sutton G.G."/>
            <person name="Wortman J.R."/>
            <person name="Yandell M.D."/>
            <person name="Zhang Q."/>
            <person name="Chen L.X."/>
            <person name="Brandon R.C."/>
            <person name="Rogers Y.-H.C."/>
            <person name="Blazej R.G."/>
            <person name="Champe M."/>
            <person name="Pfeiffer B.D."/>
            <person name="Wan K.H."/>
            <person name="Doyle C."/>
            <person name="Baxter E.G."/>
            <person name="Helt G."/>
            <person name="Nelson C.R."/>
            <person name="Miklos G.L.G."/>
            <person name="Abril J.F."/>
            <person name="Agbayani A."/>
            <person name="An H.-J."/>
            <person name="Andrews-Pfannkoch C."/>
            <person name="Baldwin D."/>
            <person name="Ballew R.M."/>
            <person name="Basu A."/>
            <person name="Baxendale J."/>
            <person name="Bayraktaroglu L."/>
            <person name="Beasley E.M."/>
            <person name="Beeson K.Y."/>
            <person name="Benos P.V."/>
            <person name="Berman B.P."/>
            <person name="Bhandari D."/>
            <person name="Bolshakov S."/>
            <person name="Borkova D."/>
            <person name="Botchan M.R."/>
            <person name="Bouck J."/>
            <person name="Brokstein P."/>
            <person name="Brottier P."/>
            <person name="Burtis K.C."/>
            <person name="Busam D.A."/>
            <person name="Butler H."/>
            <person name="Cadieu E."/>
            <person name="Center A."/>
            <person name="Chandra I."/>
            <person name="Cherry J.M."/>
            <person name="Cawley S."/>
            <person name="Dahlke C."/>
            <person name="Davenport L.B."/>
            <person name="Davies P."/>
            <person name="de Pablos B."/>
            <person name="Delcher A."/>
            <person name="Deng Z."/>
            <person name="Mays A.D."/>
            <person name="Dew I."/>
            <person name="Dietz S.M."/>
            <person name="Dodson K."/>
            <person name="Doup L.E."/>
            <person name="Downes M."/>
            <person name="Dugan-Rocha S."/>
            <person name="Dunkov B.C."/>
            <person name="Dunn P."/>
            <person name="Durbin K.J."/>
            <person name="Evangelista C.C."/>
            <person name="Ferraz C."/>
            <person name="Ferriera S."/>
            <person name="Fleischmann W."/>
            <person name="Fosler C."/>
            <person name="Gabrielian A.E."/>
            <person name="Garg N.S."/>
            <person name="Gelbart W.M."/>
            <person name="Glasser K."/>
            <person name="Glodek A."/>
            <person name="Gong F."/>
            <person name="Gorrell J.H."/>
            <person name="Gu Z."/>
            <person name="Guan P."/>
            <person name="Harris M."/>
            <person name="Harris N.L."/>
            <person name="Harvey D.A."/>
            <person name="Heiman T.J."/>
            <person name="Hernandez J.R."/>
            <person name="Houck J."/>
            <person name="Hostin D."/>
            <person name="Houston K.A."/>
            <person name="Howland T.J."/>
            <person name="Wei M.-H."/>
            <person name="Ibegwam C."/>
            <person name="Jalali M."/>
            <person name="Kalush F."/>
            <person name="Karpen G.H."/>
            <person name="Ke Z."/>
            <person name="Kennison J.A."/>
            <person name="Ketchum K.A."/>
            <person name="Kimmel B.E."/>
            <person name="Kodira C.D."/>
            <person name="Kraft C.L."/>
            <person name="Kravitz S."/>
            <person name="Kulp D."/>
            <person name="Lai Z."/>
            <person name="Lasko P."/>
            <person name="Lei Y."/>
            <person name="Levitsky A.A."/>
            <person name="Li J.H."/>
            <person name="Li Z."/>
            <person name="Liang Y."/>
            <person name="Lin X."/>
            <person name="Liu X."/>
            <person name="Mattei B."/>
            <person name="McIntosh T.C."/>
            <person name="McLeod M.P."/>
            <person name="McPherson D."/>
            <person name="Merkulov G."/>
            <person name="Milshina N.V."/>
            <person name="Mobarry C."/>
            <person name="Morris J."/>
            <person name="Moshrefi A."/>
            <person name="Mount S.M."/>
            <person name="Moy M."/>
            <person name="Murphy B."/>
            <person name="Murphy L."/>
            <person name="Muzny D.M."/>
            <person name="Nelson D.L."/>
            <person name="Nelson D.R."/>
            <person name="Nelson K.A."/>
            <person name="Nixon K."/>
            <person name="Nusskern D.R."/>
            <person name="Pacleb J.M."/>
            <person name="Palazzolo M."/>
            <person name="Pittman G.S."/>
            <person name="Pan S."/>
            <person name="Pollard J."/>
            <person name="Puri V."/>
            <person name="Reese M.G."/>
            <person name="Reinert K."/>
            <person name="Remington K."/>
            <person name="Saunders R.D.C."/>
            <person name="Scheeler F."/>
            <person name="Shen H."/>
            <person name="Shue B.C."/>
            <person name="Siden-Kiamos I."/>
            <person name="Simpson M."/>
            <person name="Skupski M.P."/>
            <person name="Smith T.J."/>
            <person name="Spier E."/>
            <person name="Spradling A.C."/>
            <person name="Stapleton M."/>
            <person name="Strong R."/>
            <person name="Sun E."/>
            <person name="Svirskas R."/>
            <person name="Tector C."/>
            <person name="Turner R."/>
            <person name="Venter E."/>
            <person name="Wang A.H."/>
            <person name="Wang X."/>
            <person name="Wang Z.-Y."/>
            <person name="Wassarman D.A."/>
            <person name="Weinstock G.M."/>
            <person name="Weissenbach J."/>
            <person name="Williams S.M."/>
            <person name="Woodage T."/>
            <person name="Worley K.C."/>
            <person name="Wu D."/>
            <person name="Yang S."/>
            <person name="Yao Q.A."/>
            <person name="Ye J."/>
            <person name="Yeh R.-F."/>
            <person name="Zaveri J.S."/>
            <person name="Zhan M."/>
            <person name="Zhang G."/>
            <person name="Zhao Q."/>
            <person name="Zheng L."/>
            <person name="Zheng X.H."/>
            <person name="Zhong F.N."/>
            <person name="Zhong W."/>
            <person name="Zhou X."/>
            <person name="Zhu S.C."/>
            <person name="Zhu X."/>
            <person name="Smith H.O."/>
            <person name="Gibbs R.A."/>
            <person name="Myers E.W."/>
            <person name="Rubin G.M."/>
            <person name="Venter J.C."/>
        </authorList>
    </citation>
    <scope>NUCLEOTIDE SEQUENCE [LARGE SCALE GENOMIC DNA]</scope>
    <source>
        <strain>Berkeley</strain>
    </source>
</reference>
<reference key="2">
    <citation type="journal article" date="2002" name="Genome Biol.">
        <title>Annotation of the Drosophila melanogaster euchromatic genome: a systematic review.</title>
        <authorList>
            <person name="Misra S."/>
            <person name="Crosby M.A."/>
            <person name="Mungall C.J."/>
            <person name="Matthews B.B."/>
            <person name="Campbell K.S."/>
            <person name="Hradecky P."/>
            <person name="Huang Y."/>
            <person name="Kaminker J.S."/>
            <person name="Millburn G.H."/>
            <person name="Prochnik S.E."/>
            <person name="Smith C.D."/>
            <person name="Tupy J.L."/>
            <person name="Whitfield E.J."/>
            <person name="Bayraktaroglu L."/>
            <person name="Berman B.P."/>
            <person name="Bettencourt B.R."/>
            <person name="Celniker S.E."/>
            <person name="de Grey A.D.N.J."/>
            <person name="Drysdale R.A."/>
            <person name="Harris N.L."/>
            <person name="Richter J."/>
            <person name="Russo S."/>
            <person name="Schroeder A.J."/>
            <person name="Shu S.Q."/>
            <person name="Stapleton M."/>
            <person name="Yamada C."/>
            <person name="Ashburner M."/>
            <person name="Gelbart W.M."/>
            <person name="Rubin G.M."/>
            <person name="Lewis S.E."/>
        </authorList>
    </citation>
    <scope>GENOME REANNOTATION</scope>
    <source>
        <strain>Berkeley</strain>
    </source>
</reference>
<sequence>MWILLGIAVLIMTLVWDNSRKQWRVNTFEKSRILGPFTIPIVGNGLQALTLRPENFIQRFGDYFNKYGKTFRLWILGECLIYTKDLKYFESILSSSTLLKKAHLYRFLRDFLGDGLLLSTGNKWTSRRKVLAPAFHFKCLENFVEIMDRNSGIMVEKLKNYADGKTCVDLFKFVSLEALDVTTETAMGVQVNAQNEPNFPYTKALKSVVYIESKRLASVSMRYNWLFPLAAPLVYRRLQKDIAIMQDFTDKVIRERRAILERARADGTYKPLIMGDDDIGGKAKMTLLDILLQATIDNKPLSDVDIREEVDVFIFAGDDTTTSGVSHALHAISRHPKVQECIYEELVSVLGPDPDASVTQTKLLELKYLDCVIKETMRLHPPVPILGRYIPEDLKIGEITIPGNTSILLMPYYVYRDPEYFPDPLVFKPERWMDMKTTSNTPPLAYIPFSSGPKNCIGQKFANLQMKALISKVIRHYELLPLGADLKATYTFILSSSTGNNVGLKPRTRVK</sequence>
<comment type="function">
    <text evidence="1">May be involved in the metabolism of insect hormones and in the breakdown of synthetic insecticides.</text>
</comment>
<comment type="cofactor">
    <cofactor evidence="1">
        <name>heme</name>
        <dbReference type="ChEBI" id="CHEBI:30413"/>
    </cofactor>
</comment>
<comment type="subcellular location">
    <subcellularLocation>
        <location evidence="2">Endoplasmic reticulum membrane</location>
        <topology evidence="2">Peripheral membrane protein</topology>
    </subcellularLocation>
    <subcellularLocation>
        <location evidence="2">Microsome membrane</location>
        <topology evidence="2">Peripheral membrane protein</topology>
    </subcellularLocation>
</comment>
<comment type="similarity">
    <text evidence="2">Belongs to the cytochrome P450 family.</text>
</comment>
<proteinExistence type="inferred from homology"/>
<accession>Q9VLZ7</accession>
<organism>
    <name type="scientific">Drosophila melanogaster</name>
    <name type="common">Fruit fly</name>
    <dbReference type="NCBI Taxonomy" id="7227"/>
    <lineage>
        <taxon>Eukaryota</taxon>
        <taxon>Metazoa</taxon>
        <taxon>Ecdysozoa</taxon>
        <taxon>Arthropoda</taxon>
        <taxon>Hexapoda</taxon>
        <taxon>Insecta</taxon>
        <taxon>Pterygota</taxon>
        <taxon>Neoptera</taxon>
        <taxon>Endopterygota</taxon>
        <taxon>Diptera</taxon>
        <taxon>Brachycera</taxon>
        <taxon>Muscomorpha</taxon>
        <taxon>Ephydroidea</taxon>
        <taxon>Drosophilidae</taxon>
        <taxon>Drosophila</taxon>
        <taxon>Sophophora</taxon>
    </lineage>
</organism>
<keyword id="KW-0256">Endoplasmic reticulum</keyword>
<keyword id="KW-0349">Heme</keyword>
<keyword id="KW-0408">Iron</keyword>
<keyword id="KW-0472">Membrane</keyword>
<keyword id="KW-0479">Metal-binding</keyword>
<keyword id="KW-0492">Microsome</keyword>
<keyword id="KW-0503">Monooxygenase</keyword>
<keyword id="KW-0560">Oxidoreductase</keyword>
<keyword id="KW-1185">Reference proteome</keyword>
<protein>
    <recommendedName>
        <fullName>Probable cytochrome P450 4d21</fullName>
        <ecNumber>1.14.-.-</ecNumber>
    </recommendedName>
    <alternativeName>
        <fullName>CYPIVD21</fullName>
    </alternativeName>
</protein>
<evidence type="ECO:0000250" key="1"/>
<evidence type="ECO:0000305" key="2"/>
<dbReference type="EC" id="1.14.-.-"/>
<dbReference type="EMBL" id="AE014134">
    <property type="protein sequence ID" value="AAF52531.1"/>
    <property type="molecule type" value="Genomic_DNA"/>
</dbReference>
<dbReference type="RefSeq" id="NP_609129.2">
    <property type="nucleotide sequence ID" value="NM_135285.3"/>
</dbReference>
<dbReference type="SMR" id="Q9VLZ7"/>
<dbReference type="FunCoup" id="Q9VLZ7">
    <property type="interactions" value="93"/>
</dbReference>
<dbReference type="STRING" id="7227.FBpp0079095"/>
<dbReference type="PaxDb" id="7227-FBpp0079095"/>
<dbReference type="EnsemblMetazoa" id="FBtr0079471">
    <property type="protein sequence ID" value="FBpp0079095"/>
    <property type="gene ID" value="FBgn0031925"/>
</dbReference>
<dbReference type="GeneID" id="34036"/>
<dbReference type="KEGG" id="dme:Dmel_CG6730"/>
<dbReference type="UCSC" id="CG6730-RA">
    <property type="organism name" value="d. melanogaster"/>
</dbReference>
<dbReference type="AGR" id="FB:FBgn0031925"/>
<dbReference type="CTD" id="34036"/>
<dbReference type="FlyBase" id="FBgn0031925">
    <property type="gene designation" value="Cyp4d21"/>
</dbReference>
<dbReference type="VEuPathDB" id="VectorBase:FBgn0031925"/>
<dbReference type="eggNOG" id="KOG0157">
    <property type="taxonomic scope" value="Eukaryota"/>
</dbReference>
<dbReference type="GeneTree" id="ENSGT00940000165700"/>
<dbReference type="HOGENOM" id="CLU_001570_5_1_1"/>
<dbReference type="InParanoid" id="Q9VLZ7"/>
<dbReference type="OMA" id="ILLMPYY"/>
<dbReference type="OrthoDB" id="1470350at2759"/>
<dbReference type="PhylomeDB" id="Q9VLZ7"/>
<dbReference type="Reactome" id="R-DME-193144">
    <property type="pathway name" value="Estrogen biosynthesis"/>
</dbReference>
<dbReference type="Reactome" id="R-DME-211976">
    <property type="pathway name" value="Endogenous sterols"/>
</dbReference>
<dbReference type="BioGRID-ORCS" id="34036">
    <property type="hits" value="0 hits in 3 CRISPR screens"/>
</dbReference>
<dbReference type="GenomeRNAi" id="34036"/>
<dbReference type="PRO" id="PR:Q9VLZ7"/>
<dbReference type="Proteomes" id="UP000000803">
    <property type="component" value="Chromosome 2L"/>
</dbReference>
<dbReference type="Bgee" id="FBgn0031925">
    <property type="expression patterns" value="Expressed in epithelial cell in insect leg and 66 other cell types or tissues"/>
</dbReference>
<dbReference type="ExpressionAtlas" id="Q9VLZ7">
    <property type="expression patterns" value="baseline and differential"/>
</dbReference>
<dbReference type="GO" id="GO:0005737">
    <property type="term" value="C:cytoplasm"/>
    <property type="evidence" value="ECO:0000314"/>
    <property type="project" value="FlyBase"/>
</dbReference>
<dbReference type="GO" id="GO:0005789">
    <property type="term" value="C:endoplasmic reticulum membrane"/>
    <property type="evidence" value="ECO:0007669"/>
    <property type="project" value="UniProtKB-SubCell"/>
</dbReference>
<dbReference type="GO" id="GO:0020037">
    <property type="term" value="F:heme binding"/>
    <property type="evidence" value="ECO:0007669"/>
    <property type="project" value="InterPro"/>
</dbReference>
<dbReference type="GO" id="GO:0005506">
    <property type="term" value="F:iron ion binding"/>
    <property type="evidence" value="ECO:0007669"/>
    <property type="project" value="InterPro"/>
</dbReference>
<dbReference type="GO" id="GO:0004497">
    <property type="term" value="F:monooxygenase activity"/>
    <property type="evidence" value="ECO:0007669"/>
    <property type="project" value="UniProtKB-KW"/>
</dbReference>
<dbReference type="GO" id="GO:0016705">
    <property type="term" value="F:oxidoreductase activity, acting on paired donors, with incorporation or reduction of molecular oxygen"/>
    <property type="evidence" value="ECO:0007669"/>
    <property type="project" value="InterPro"/>
</dbReference>
<dbReference type="GO" id="GO:0007618">
    <property type="term" value="P:mating"/>
    <property type="evidence" value="ECO:0000315"/>
    <property type="project" value="FlyBase"/>
</dbReference>
<dbReference type="CDD" id="cd20628">
    <property type="entry name" value="CYP4"/>
    <property type="match status" value="1"/>
</dbReference>
<dbReference type="FunFam" id="1.10.630.10:FF:000167">
    <property type="entry name" value="GM16491"/>
    <property type="match status" value="1"/>
</dbReference>
<dbReference type="Gene3D" id="1.10.630.10">
    <property type="entry name" value="Cytochrome P450"/>
    <property type="match status" value="1"/>
</dbReference>
<dbReference type="InterPro" id="IPR001128">
    <property type="entry name" value="Cyt_P450"/>
</dbReference>
<dbReference type="InterPro" id="IPR017972">
    <property type="entry name" value="Cyt_P450_CS"/>
</dbReference>
<dbReference type="InterPro" id="IPR002403">
    <property type="entry name" value="Cyt_P450_E_grp-IV"/>
</dbReference>
<dbReference type="InterPro" id="IPR036396">
    <property type="entry name" value="Cyt_P450_sf"/>
</dbReference>
<dbReference type="InterPro" id="IPR050196">
    <property type="entry name" value="Cytochrome_P450_Monoox"/>
</dbReference>
<dbReference type="PANTHER" id="PTHR24291:SF187">
    <property type="entry name" value="CYTOCHROME P450 4AE1-RELATED"/>
    <property type="match status" value="1"/>
</dbReference>
<dbReference type="PANTHER" id="PTHR24291">
    <property type="entry name" value="CYTOCHROME P450 FAMILY 4"/>
    <property type="match status" value="1"/>
</dbReference>
<dbReference type="Pfam" id="PF00067">
    <property type="entry name" value="p450"/>
    <property type="match status" value="1"/>
</dbReference>
<dbReference type="PRINTS" id="PR00465">
    <property type="entry name" value="EP450IV"/>
</dbReference>
<dbReference type="PRINTS" id="PR00385">
    <property type="entry name" value="P450"/>
</dbReference>
<dbReference type="SUPFAM" id="SSF48264">
    <property type="entry name" value="Cytochrome P450"/>
    <property type="match status" value="1"/>
</dbReference>
<dbReference type="PROSITE" id="PS00086">
    <property type="entry name" value="CYTOCHROME_P450"/>
    <property type="match status" value="1"/>
</dbReference>
<feature type="chain" id="PRO_0000051839" description="Probable cytochrome P450 4d21">
    <location>
        <begin position="1"/>
        <end position="511"/>
    </location>
</feature>
<feature type="binding site" description="axial binding residue" evidence="1">
    <location>
        <position position="456"/>
    </location>
    <ligand>
        <name>heme</name>
        <dbReference type="ChEBI" id="CHEBI:30413"/>
    </ligand>
    <ligandPart>
        <name>Fe</name>
        <dbReference type="ChEBI" id="CHEBI:18248"/>
    </ligandPart>
</feature>